<dbReference type="EMBL" id="DS499594">
    <property type="protein sequence ID" value="EDP56233.1"/>
    <property type="molecule type" value="Genomic_DNA"/>
</dbReference>
<dbReference type="SMR" id="B0XQB9"/>
<dbReference type="EnsemblFungi" id="EDP56233">
    <property type="protein sequence ID" value="EDP56233"/>
    <property type="gene ID" value="AFUB_009410"/>
</dbReference>
<dbReference type="VEuPathDB" id="FungiDB:AFUB_009410"/>
<dbReference type="HOGENOM" id="CLU_044094_1_0_1"/>
<dbReference type="OrthoDB" id="69693at5052"/>
<dbReference type="PhylomeDB" id="B0XQB9"/>
<dbReference type="Proteomes" id="UP000001699">
    <property type="component" value="Unassembled WGS sequence"/>
</dbReference>
<dbReference type="GO" id="GO:0016282">
    <property type="term" value="C:eukaryotic 43S preinitiation complex"/>
    <property type="evidence" value="ECO:0007669"/>
    <property type="project" value="UniProtKB-UniRule"/>
</dbReference>
<dbReference type="GO" id="GO:0033290">
    <property type="term" value="C:eukaryotic 48S preinitiation complex"/>
    <property type="evidence" value="ECO:0007669"/>
    <property type="project" value="UniProtKB-UniRule"/>
</dbReference>
<dbReference type="GO" id="GO:0005852">
    <property type="term" value="C:eukaryotic translation initiation factor 3 complex"/>
    <property type="evidence" value="ECO:0007669"/>
    <property type="project" value="UniProtKB-UniRule"/>
</dbReference>
<dbReference type="GO" id="GO:0008237">
    <property type="term" value="F:metallopeptidase activity"/>
    <property type="evidence" value="ECO:0007669"/>
    <property type="project" value="InterPro"/>
</dbReference>
<dbReference type="GO" id="GO:0003743">
    <property type="term" value="F:translation initiation factor activity"/>
    <property type="evidence" value="ECO:0007669"/>
    <property type="project" value="UniProtKB-UniRule"/>
</dbReference>
<dbReference type="GO" id="GO:0001732">
    <property type="term" value="P:formation of cytoplasmic translation initiation complex"/>
    <property type="evidence" value="ECO:0007669"/>
    <property type="project" value="UniProtKB-UniRule"/>
</dbReference>
<dbReference type="CDD" id="cd08065">
    <property type="entry name" value="MPN_eIF3h"/>
    <property type="match status" value="1"/>
</dbReference>
<dbReference type="FunFam" id="3.40.140.10:FF:000052">
    <property type="entry name" value="Eukaryotic translation initiation factor 3 subunit H"/>
    <property type="match status" value="1"/>
</dbReference>
<dbReference type="Gene3D" id="3.40.140.10">
    <property type="entry name" value="Cytidine Deaminase, domain 2"/>
    <property type="match status" value="1"/>
</dbReference>
<dbReference type="HAMAP" id="MF_03007">
    <property type="entry name" value="eIF3h"/>
    <property type="match status" value="1"/>
</dbReference>
<dbReference type="InterPro" id="IPR027524">
    <property type="entry name" value="eIF3h"/>
</dbReference>
<dbReference type="InterPro" id="IPR045810">
    <property type="entry name" value="eIF3h_C"/>
</dbReference>
<dbReference type="InterPro" id="IPR000555">
    <property type="entry name" value="JAMM/MPN+_dom"/>
</dbReference>
<dbReference type="InterPro" id="IPR050242">
    <property type="entry name" value="JAMM_MPN+_peptidase_M67A"/>
</dbReference>
<dbReference type="InterPro" id="IPR037518">
    <property type="entry name" value="MPN"/>
</dbReference>
<dbReference type="PANTHER" id="PTHR10410">
    <property type="entry name" value="EUKARYOTIC TRANSLATION INITIATION FACTOR 3 -RELATED"/>
    <property type="match status" value="1"/>
</dbReference>
<dbReference type="Pfam" id="PF19445">
    <property type="entry name" value="eIF3h_C"/>
    <property type="match status" value="2"/>
</dbReference>
<dbReference type="Pfam" id="PF01398">
    <property type="entry name" value="JAB"/>
    <property type="match status" value="1"/>
</dbReference>
<dbReference type="SMART" id="SM00232">
    <property type="entry name" value="JAB_MPN"/>
    <property type="match status" value="1"/>
</dbReference>
<dbReference type="PROSITE" id="PS50249">
    <property type="entry name" value="MPN"/>
    <property type="match status" value="1"/>
</dbReference>
<sequence>MAENETPLTAVKVEALVVMKIMKHCSQTFPTTATGSIVGMDVGGTLEITNSFPFPVVEVPPESHFDNAAANPAAAAPRAKANTVYQAEMIRMLREVNVDANNVGWYTSANMGNFVNMNVIENQFFYQKEMNERTVALVHDVSRSSQGSLSLRAFRLSPKFMTAFKENKFTSEELQKSGLRYQDIFVELPVEIHNSHLITSFIHQLQTPNIPAPTELPSSLAALESGPFVKSSILAPNFDNLALSIDPFLEKNCDLLLDSIETHHTETNNFQYYQRSLAREQQRISAWQQKRKQENATRAALKQPLLPEDEWQRLFKLPQEPSRLESMLNSRQVDQYARQIDSFVSSTTGKMFAVKGNLLPGETAK</sequence>
<proteinExistence type="inferred from homology"/>
<name>EIF3H_ASPFC</name>
<feature type="chain" id="PRO_0000365201" description="Eukaryotic translation initiation factor 3 subunit H">
    <location>
        <begin position="1"/>
        <end position="365"/>
    </location>
</feature>
<feature type="domain" description="MPN" evidence="2">
    <location>
        <begin position="11"/>
        <end position="160"/>
    </location>
</feature>
<accession>B0XQB9</accession>
<organism>
    <name type="scientific">Aspergillus fumigatus (strain CBS 144.89 / FGSC A1163 / CEA10)</name>
    <name type="common">Neosartorya fumigata</name>
    <dbReference type="NCBI Taxonomy" id="451804"/>
    <lineage>
        <taxon>Eukaryota</taxon>
        <taxon>Fungi</taxon>
        <taxon>Dikarya</taxon>
        <taxon>Ascomycota</taxon>
        <taxon>Pezizomycotina</taxon>
        <taxon>Eurotiomycetes</taxon>
        <taxon>Eurotiomycetidae</taxon>
        <taxon>Eurotiales</taxon>
        <taxon>Aspergillaceae</taxon>
        <taxon>Aspergillus</taxon>
        <taxon>Aspergillus subgen. Fumigati</taxon>
    </lineage>
</organism>
<gene>
    <name type="ORF">AFUB_009410</name>
</gene>
<comment type="function">
    <text evidence="1">Component of the eukaryotic translation initiation factor 3 (eIF-3) complex, which is involved in protein synthesis of a specialized repertoire of mRNAs and, together with other initiation factors, stimulates binding of mRNA and methionyl-tRNAi to the 40S ribosome. The eIF-3 complex specifically targets and initiates translation of a subset of mRNAs involved in cell proliferation.</text>
</comment>
<comment type="subunit">
    <text evidence="1">Component of the eukaryotic translation initiation factor 3 (eIF-3) complex.</text>
</comment>
<comment type="subcellular location">
    <subcellularLocation>
        <location evidence="1">Cytoplasm</location>
    </subcellularLocation>
</comment>
<comment type="similarity">
    <text evidence="1">Belongs to the eIF-3 subunit H family.</text>
</comment>
<evidence type="ECO:0000255" key="1">
    <source>
        <dbReference type="HAMAP-Rule" id="MF_03007"/>
    </source>
</evidence>
<evidence type="ECO:0000255" key="2">
    <source>
        <dbReference type="PROSITE-ProRule" id="PRU01182"/>
    </source>
</evidence>
<reference key="1">
    <citation type="journal article" date="2008" name="PLoS Genet.">
        <title>Genomic islands in the pathogenic filamentous fungus Aspergillus fumigatus.</title>
        <authorList>
            <person name="Fedorova N.D."/>
            <person name="Khaldi N."/>
            <person name="Joardar V.S."/>
            <person name="Maiti R."/>
            <person name="Amedeo P."/>
            <person name="Anderson M.J."/>
            <person name="Crabtree J."/>
            <person name="Silva J.C."/>
            <person name="Badger J.H."/>
            <person name="Albarraq A."/>
            <person name="Angiuoli S."/>
            <person name="Bussey H."/>
            <person name="Bowyer P."/>
            <person name="Cotty P.J."/>
            <person name="Dyer P.S."/>
            <person name="Egan A."/>
            <person name="Galens K."/>
            <person name="Fraser-Liggett C.M."/>
            <person name="Haas B.J."/>
            <person name="Inman J.M."/>
            <person name="Kent R."/>
            <person name="Lemieux S."/>
            <person name="Malavazi I."/>
            <person name="Orvis J."/>
            <person name="Roemer T."/>
            <person name="Ronning C.M."/>
            <person name="Sundaram J.P."/>
            <person name="Sutton G."/>
            <person name="Turner G."/>
            <person name="Venter J.C."/>
            <person name="White O.R."/>
            <person name="Whitty B.R."/>
            <person name="Youngman P."/>
            <person name="Wolfe K.H."/>
            <person name="Goldman G.H."/>
            <person name="Wortman J.R."/>
            <person name="Jiang B."/>
            <person name="Denning D.W."/>
            <person name="Nierman W.C."/>
        </authorList>
    </citation>
    <scope>NUCLEOTIDE SEQUENCE [LARGE SCALE GENOMIC DNA]</scope>
    <source>
        <strain>CBS 144.89 / FGSC A1163 / CEA10</strain>
    </source>
</reference>
<protein>
    <recommendedName>
        <fullName evidence="1">Eukaryotic translation initiation factor 3 subunit H</fullName>
        <shortName evidence="1">eIF3h</shortName>
    </recommendedName>
</protein>
<keyword id="KW-0963">Cytoplasm</keyword>
<keyword id="KW-0396">Initiation factor</keyword>
<keyword id="KW-0648">Protein biosynthesis</keyword>